<reference key="1">
    <citation type="journal article" date="2009" name="Physiol. Plantarum">
        <title>The presence of sinapyl lignin in Ginkgo biloba cell cultures changes our views of the evolution of lignin biosynthesis.</title>
        <authorList>
            <person name="Novo Uzal E."/>
            <person name="Gomez Ros L.V."/>
            <person name="Pomar F."/>
            <person name="Bernal M.A."/>
            <person name="Paradela A."/>
            <person name="Albar J.P."/>
            <person name="Ros Barcelo A."/>
        </authorList>
    </citation>
    <scope>PROTEIN SEQUENCE</scope>
    <source>
        <strain>PC-650</strain>
        <tissue>Callus</tissue>
    </source>
</reference>
<protein>
    <recommendedName>
        <fullName>Unknown protein 9</fullName>
    </recommendedName>
</protein>
<keyword id="KW-0903">Direct protein sequencing</keyword>
<feature type="chain" id="PRO_0000341522" description="Unknown protein 9">
    <location>
        <begin position="1" status="less than"/>
        <end position="7" status="greater than"/>
    </location>
</feature>
<feature type="unsure residue" description="L or I">
    <location>
        <position position="5"/>
    </location>
</feature>
<feature type="non-terminal residue">
    <location>
        <position position="1"/>
    </location>
</feature>
<feature type="non-terminal residue">
    <location>
        <position position="7"/>
    </location>
</feature>
<proteinExistence type="evidence at protein level"/>
<organism>
    <name type="scientific">Ginkgo biloba</name>
    <name type="common">Ginkgo</name>
    <name type="synonym">Maidenhair tree</name>
    <dbReference type="NCBI Taxonomy" id="3311"/>
    <lineage>
        <taxon>Eukaryota</taxon>
        <taxon>Viridiplantae</taxon>
        <taxon>Streptophyta</taxon>
        <taxon>Embryophyta</taxon>
        <taxon>Tracheophyta</taxon>
        <taxon>Spermatophyta</taxon>
        <taxon>Ginkgoidae</taxon>
        <taxon>Ginkgoales</taxon>
        <taxon>Ginkgoaceae</taxon>
        <taxon>Ginkgo</taxon>
    </lineage>
</organism>
<name>UP09_GINBI</name>
<accession>P85407</accession>
<sequence length="7" mass="721">STDALSK</sequence>